<proteinExistence type="inferred from homology"/>
<keyword id="KW-0150">Chloroplast</keyword>
<keyword id="KW-0472">Membrane</keyword>
<keyword id="KW-0520">NAD</keyword>
<keyword id="KW-0521">NADP</keyword>
<keyword id="KW-0934">Plastid</keyword>
<keyword id="KW-0618">Plastoquinone</keyword>
<keyword id="KW-0874">Quinone</keyword>
<keyword id="KW-1185">Reference proteome</keyword>
<keyword id="KW-0793">Thylakoid</keyword>
<keyword id="KW-1278">Translocase</keyword>
<keyword id="KW-0812">Transmembrane</keyword>
<keyword id="KW-1133">Transmembrane helix</keyword>
<keyword id="KW-0813">Transport</keyword>
<reference key="1">
    <citation type="journal article" date="2006" name="Mol. Genet. Genomics">
        <title>The chloroplast genome of Nicotiana sylvestris and Nicotiana tomentosiformis: complete sequencing confirms that the Nicotiana sylvestris progenitor is the maternal genome donor of Nicotiana tabacum.</title>
        <authorList>
            <person name="Yukawa M."/>
            <person name="Tsudzuki T."/>
            <person name="Sugiura M."/>
        </authorList>
    </citation>
    <scope>NUCLEOTIDE SEQUENCE [LARGE SCALE GENOMIC DNA]</scope>
</reference>
<protein>
    <recommendedName>
        <fullName evidence="1">NAD(P)H-quinone oxidoreductase subunit 2 A, chloroplastic</fullName>
        <ecNumber evidence="1">7.1.1.-</ecNumber>
    </recommendedName>
    <alternativeName>
        <fullName evidence="1">NAD(P)H dehydrogenase, subunit 2 A</fullName>
    </alternativeName>
    <alternativeName>
        <fullName evidence="1">NADH-plastoquinone oxidoreductase subunit 2 A</fullName>
    </alternativeName>
</protein>
<accession>P0CC96</accession>
<accession>Q3C1M9</accession>
<dbReference type="EC" id="7.1.1.-" evidence="1"/>
<dbReference type="EMBL" id="AB237912">
    <property type="protein sequence ID" value="BAE46703.1"/>
    <property type="molecule type" value="Genomic_DNA"/>
</dbReference>
<dbReference type="SMR" id="P0CC96"/>
<dbReference type="KEGG" id="nsy:3735059"/>
<dbReference type="KEGG" id="nsy:3735060"/>
<dbReference type="eggNOG" id="KOG4668">
    <property type="taxonomic scope" value="Eukaryota"/>
</dbReference>
<dbReference type="OrthoDB" id="25138at4085"/>
<dbReference type="Proteomes" id="UP000189701">
    <property type="component" value="Unplaced"/>
</dbReference>
<dbReference type="GO" id="GO:0009535">
    <property type="term" value="C:chloroplast thylakoid membrane"/>
    <property type="evidence" value="ECO:0007669"/>
    <property type="project" value="UniProtKB-SubCell"/>
</dbReference>
<dbReference type="GO" id="GO:0008137">
    <property type="term" value="F:NADH dehydrogenase (ubiquinone) activity"/>
    <property type="evidence" value="ECO:0007669"/>
    <property type="project" value="InterPro"/>
</dbReference>
<dbReference type="GO" id="GO:0048038">
    <property type="term" value="F:quinone binding"/>
    <property type="evidence" value="ECO:0007669"/>
    <property type="project" value="UniProtKB-KW"/>
</dbReference>
<dbReference type="GO" id="GO:0042773">
    <property type="term" value="P:ATP synthesis coupled electron transport"/>
    <property type="evidence" value="ECO:0007669"/>
    <property type="project" value="InterPro"/>
</dbReference>
<dbReference type="GO" id="GO:0019684">
    <property type="term" value="P:photosynthesis, light reaction"/>
    <property type="evidence" value="ECO:0007669"/>
    <property type="project" value="UniProtKB-UniRule"/>
</dbReference>
<dbReference type="HAMAP" id="MF_00445">
    <property type="entry name" value="NDH1_NuoN_1"/>
    <property type="match status" value="1"/>
</dbReference>
<dbReference type="InterPro" id="IPR010096">
    <property type="entry name" value="NADH-Q_OxRdtase_suN/2"/>
</dbReference>
<dbReference type="InterPro" id="IPR001750">
    <property type="entry name" value="ND/Mrp_TM"/>
</dbReference>
<dbReference type="InterPro" id="IPR045693">
    <property type="entry name" value="Ndh2_N"/>
</dbReference>
<dbReference type="NCBIfam" id="TIGR01770">
    <property type="entry name" value="NDH_I_N"/>
    <property type="match status" value="1"/>
</dbReference>
<dbReference type="NCBIfam" id="NF002701">
    <property type="entry name" value="PRK02504.1"/>
    <property type="match status" value="1"/>
</dbReference>
<dbReference type="PANTHER" id="PTHR22773">
    <property type="entry name" value="NADH DEHYDROGENASE"/>
    <property type="match status" value="1"/>
</dbReference>
<dbReference type="Pfam" id="PF19530">
    <property type="entry name" value="Ndh2_N"/>
    <property type="match status" value="1"/>
</dbReference>
<dbReference type="Pfam" id="PF00361">
    <property type="entry name" value="Proton_antipo_M"/>
    <property type="match status" value="1"/>
</dbReference>
<dbReference type="PRINTS" id="PR01434">
    <property type="entry name" value="NADHDHGNASE5"/>
</dbReference>
<evidence type="ECO:0000255" key="1">
    <source>
        <dbReference type="HAMAP-Rule" id="MF_00445"/>
    </source>
</evidence>
<geneLocation type="chloroplast"/>
<feature type="chain" id="PRO_0000275602" description="NAD(P)H-quinone oxidoreductase subunit 2 A, chloroplastic">
    <location>
        <begin position="1"/>
        <end position="510"/>
    </location>
</feature>
<feature type="transmembrane region" description="Helical" evidence="1">
    <location>
        <begin position="24"/>
        <end position="44"/>
    </location>
</feature>
<feature type="transmembrane region" description="Helical" evidence="1">
    <location>
        <begin position="57"/>
        <end position="77"/>
    </location>
</feature>
<feature type="transmembrane region" description="Helical" evidence="1">
    <location>
        <begin position="99"/>
        <end position="119"/>
    </location>
</feature>
<feature type="transmembrane region" description="Helical" evidence="1">
    <location>
        <begin position="124"/>
        <end position="144"/>
    </location>
</feature>
<feature type="transmembrane region" description="Helical" evidence="1">
    <location>
        <begin position="149"/>
        <end position="169"/>
    </location>
</feature>
<feature type="transmembrane region" description="Helical" evidence="1">
    <location>
        <begin position="183"/>
        <end position="203"/>
    </location>
</feature>
<feature type="transmembrane region" description="Helical" evidence="1">
    <location>
        <begin position="227"/>
        <end position="247"/>
    </location>
</feature>
<feature type="transmembrane region" description="Helical" evidence="1">
    <location>
        <begin position="295"/>
        <end position="315"/>
    </location>
</feature>
<feature type="transmembrane region" description="Helical" evidence="1">
    <location>
        <begin position="323"/>
        <end position="343"/>
    </location>
</feature>
<feature type="transmembrane region" description="Helical" evidence="1">
    <location>
        <begin position="354"/>
        <end position="374"/>
    </location>
</feature>
<feature type="transmembrane region" description="Helical" evidence="1">
    <location>
        <begin position="395"/>
        <end position="415"/>
    </location>
</feature>
<feature type="transmembrane region" description="Helical" evidence="1">
    <location>
        <begin position="418"/>
        <end position="438"/>
    </location>
</feature>
<feature type="transmembrane region" description="Helical" evidence="1">
    <location>
        <begin position="484"/>
        <end position="504"/>
    </location>
</feature>
<sequence length="510" mass="56645">MIWHVQNENFILDSTRIFMKAFHLLLFDGSLIFPECILIFGLILLLMIDSTSDQKDIPWLYFISSTSLVMSITALLFRWREEPMISFSGNFQTNNFNEIFQFLILLCSTLCIPLSVEYIECTEMAITEFLLFVLTATLGGMFLCGANDLITIFVAPECFSLCSYLLSGYTKKDVRSNEATMKYLLMGGASSSILVHGFSWLYGSSGGEIELQEIVNGLINTQMYNSPGISIALIFITVGIGFKLSPAPSHQWTPDVYEGSPTPVVAFLSVTSKVAASASATRIFDIPFYFSSNEWHLLLEILAILSMILGNLIAITQTSMKRMLAYSSIGQIGYVIIGIIVGDSNDGYASMITYMLFYISMNLGTFACIVLFGLRTGTDNIRDYAGLYTKDPFLALSLALCLLSLGGLPPLAGFFGKLYLFWCGWQAGLYFLVLIGLLTSVVSIYYYLKIIKLLMTGRNQEITPHVRNYRRSPLRSNNSIELSMIVCVIASTIPGISMNPIIAIAQDSLF</sequence>
<gene>
    <name evidence="1" type="primary">ndhB1</name>
</gene>
<comment type="function">
    <text evidence="1">NDH shuttles electrons from NAD(P)H:plastoquinone, via FMN and iron-sulfur (Fe-S) centers, to quinones in the photosynthetic chain and possibly in a chloroplast respiratory chain. The immediate electron acceptor for the enzyme in this species is believed to be plastoquinone. Couples the redox reaction to proton translocation, and thus conserves the redox energy in a proton gradient.</text>
</comment>
<comment type="catalytic activity">
    <reaction evidence="1">
        <text>a plastoquinone + NADH + (n+1) H(+)(in) = a plastoquinol + NAD(+) + n H(+)(out)</text>
        <dbReference type="Rhea" id="RHEA:42608"/>
        <dbReference type="Rhea" id="RHEA-COMP:9561"/>
        <dbReference type="Rhea" id="RHEA-COMP:9562"/>
        <dbReference type="ChEBI" id="CHEBI:15378"/>
        <dbReference type="ChEBI" id="CHEBI:17757"/>
        <dbReference type="ChEBI" id="CHEBI:57540"/>
        <dbReference type="ChEBI" id="CHEBI:57945"/>
        <dbReference type="ChEBI" id="CHEBI:62192"/>
    </reaction>
</comment>
<comment type="catalytic activity">
    <reaction evidence="1">
        <text>a plastoquinone + NADPH + (n+1) H(+)(in) = a plastoquinol + NADP(+) + n H(+)(out)</text>
        <dbReference type="Rhea" id="RHEA:42612"/>
        <dbReference type="Rhea" id="RHEA-COMP:9561"/>
        <dbReference type="Rhea" id="RHEA-COMP:9562"/>
        <dbReference type="ChEBI" id="CHEBI:15378"/>
        <dbReference type="ChEBI" id="CHEBI:17757"/>
        <dbReference type="ChEBI" id="CHEBI:57783"/>
        <dbReference type="ChEBI" id="CHEBI:58349"/>
        <dbReference type="ChEBI" id="CHEBI:62192"/>
    </reaction>
</comment>
<comment type="subunit">
    <text evidence="1">NDH is composed of at least 16 different subunits, 5 of which are encoded in the nucleus.</text>
</comment>
<comment type="subcellular location">
    <subcellularLocation>
        <location evidence="1">Plastid</location>
        <location evidence="1">Chloroplast thylakoid membrane</location>
        <topology evidence="1">Multi-pass membrane protein</topology>
    </subcellularLocation>
</comment>
<comment type="similarity">
    <text evidence="1">Belongs to the complex I subunit 2 family.</text>
</comment>
<organism>
    <name type="scientific">Nicotiana sylvestris</name>
    <name type="common">Wood tobacco</name>
    <name type="synonym">South American tobacco</name>
    <dbReference type="NCBI Taxonomy" id="4096"/>
    <lineage>
        <taxon>Eukaryota</taxon>
        <taxon>Viridiplantae</taxon>
        <taxon>Streptophyta</taxon>
        <taxon>Embryophyta</taxon>
        <taxon>Tracheophyta</taxon>
        <taxon>Spermatophyta</taxon>
        <taxon>Magnoliopsida</taxon>
        <taxon>eudicotyledons</taxon>
        <taxon>Gunneridae</taxon>
        <taxon>Pentapetalae</taxon>
        <taxon>asterids</taxon>
        <taxon>lamiids</taxon>
        <taxon>Solanales</taxon>
        <taxon>Solanaceae</taxon>
        <taxon>Nicotianoideae</taxon>
        <taxon>Nicotianeae</taxon>
        <taxon>Nicotiana</taxon>
    </lineage>
</organism>
<name>NU2C1_NICSY</name>